<comment type="similarity">
    <text evidence="1">Belongs to the mimivirus L17x/L18x family.</text>
</comment>
<gene>
    <name type="ordered locus">MIMI_L870</name>
</gene>
<name>YL870_MIMIV</name>
<reference key="1">
    <citation type="journal article" date="2004" name="Science">
        <title>The 1.2-megabase genome sequence of Mimivirus.</title>
        <authorList>
            <person name="Raoult D."/>
            <person name="Audic S."/>
            <person name="Robert C."/>
            <person name="Abergel C."/>
            <person name="Renesto P."/>
            <person name="Ogata H."/>
            <person name="La Scola B."/>
            <person name="Susan M."/>
            <person name="Claverie J.-M."/>
        </authorList>
    </citation>
    <scope>NUCLEOTIDE SEQUENCE [LARGE SCALE GENOMIC DNA]</scope>
    <source>
        <strain>Rowbotham-Bradford</strain>
    </source>
</reference>
<feature type="chain" id="PRO_0000071381" description="Uncharacterized protein L870">
    <location>
        <begin position="1"/>
        <end position="353"/>
    </location>
</feature>
<organismHost>
    <name type="scientific">Acanthamoeba polyphaga</name>
    <name type="common">Amoeba</name>
    <dbReference type="NCBI Taxonomy" id="5757"/>
</organismHost>
<keyword id="KW-1185">Reference proteome</keyword>
<proteinExistence type="inferred from homology"/>
<dbReference type="EMBL" id="AY653733">
    <property type="protein sequence ID" value="AAV51128.1"/>
    <property type="molecule type" value="Genomic_DNA"/>
</dbReference>
<dbReference type="KEGG" id="vg:9925534"/>
<dbReference type="OrthoDB" id="40404at10239"/>
<dbReference type="Proteomes" id="UP000001134">
    <property type="component" value="Genome"/>
</dbReference>
<evidence type="ECO:0000305" key="1"/>
<accession>Q5UP42</accession>
<sequence length="353" mass="41823">MESFKFKFCLCGDNCPSEREFSKYCVYTDDQQYFYTQKRLIPVIITETKKRVRKYPVNVKYVEIDINDVVDFFEYNIKNYIFTIFRELPIIMSGDCYYESSTIEIIKYIAKNNITNLSIFFIKNSKYFYNNAIFNGICCFSNLDVVKSIIKYIPISLLQNCLNHGFIHSNNDVVEYLLKTYMKYVKCILSKKKIKGTMFHLDSPKTVFLKLRSSLKYLLKLKYQKAMVIYEYIIDQFSQLENDLIETDIENDMIEIRDKIISKIQYNNEIATHILKDSLSYKQDDNLSFTRQLILDGGNLNNICDYAIDLIIMYKNINLLDLMYDKKLICQNDLNHILMSSSKTDPEFIQELI</sequence>
<organism>
    <name type="scientific">Acanthamoeba polyphaga mimivirus</name>
    <name type="common">APMV</name>
    <dbReference type="NCBI Taxonomy" id="212035"/>
    <lineage>
        <taxon>Viruses</taxon>
        <taxon>Varidnaviria</taxon>
        <taxon>Bamfordvirae</taxon>
        <taxon>Nucleocytoviricota</taxon>
        <taxon>Megaviricetes</taxon>
        <taxon>Imitervirales</taxon>
        <taxon>Mimiviridae</taxon>
        <taxon>Megamimivirinae</taxon>
        <taxon>Mimivirus</taxon>
        <taxon>Mimivirus bradfordmassiliense</taxon>
    </lineage>
</organism>
<protein>
    <recommendedName>
        <fullName>Uncharacterized protein L870</fullName>
    </recommendedName>
</protein>